<comment type="function">
    <text evidence="1">Nucleotidase that shows phosphatase activity on nucleoside 5'-monophosphates.</text>
</comment>
<comment type="catalytic activity">
    <reaction evidence="1">
        <text>a ribonucleoside 5'-phosphate + H2O = a ribonucleoside + phosphate</text>
        <dbReference type="Rhea" id="RHEA:12484"/>
        <dbReference type="ChEBI" id="CHEBI:15377"/>
        <dbReference type="ChEBI" id="CHEBI:18254"/>
        <dbReference type="ChEBI" id="CHEBI:43474"/>
        <dbReference type="ChEBI" id="CHEBI:58043"/>
        <dbReference type="EC" id="3.1.3.5"/>
    </reaction>
</comment>
<comment type="cofactor">
    <cofactor evidence="1">
        <name>a divalent metal cation</name>
        <dbReference type="ChEBI" id="CHEBI:60240"/>
    </cofactor>
    <text evidence="1">Binds 1 divalent metal cation per subunit.</text>
</comment>
<comment type="subcellular location">
    <subcellularLocation>
        <location evidence="1">Cytoplasm</location>
    </subcellularLocation>
</comment>
<comment type="similarity">
    <text evidence="1">Belongs to the SurE nucleotidase family.</text>
</comment>
<feature type="chain" id="PRO_1000091996" description="5'-nucleotidase SurE">
    <location>
        <begin position="1"/>
        <end position="258"/>
    </location>
</feature>
<feature type="binding site" evidence="1">
    <location>
        <position position="16"/>
    </location>
    <ligand>
        <name>a divalent metal cation</name>
        <dbReference type="ChEBI" id="CHEBI:60240"/>
    </ligand>
</feature>
<feature type="binding site" evidence="1">
    <location>
        <position position="17"/>
    </location>
    <ligand>
        <name>a divalent metal cation</name>
        <dbReference type="ChEBI" id="CHEBI:60240"/>
    </ligand>
</feature>
<feature type="binding site" evidence="1">
    <location>
        <position position="47"/>
    </location>
    <ligand>
        <name>a divalent metal cation</name>
        <dbReference type="ChEBI" id="CHEBI:60240"/>
    </ligand>
</feature>
<feature type="binding site" evidence="1">
    <location>
        <position position="99"/>
    </location>
    <ligand>
        <name>a divalent metal cation</name>
        <dbReference type="ChEBI" id="CHEBI:60240"/>
    </ligand>
</feature>
<keyword id="KW-0963">Cytoplasm</keyword>
<keyword id="KW-0378">Hydrolase</keyword>
<keyword id="KW-0479">Metal-binding</keyword>
<keyword id="KW-0547">Nucleotide-binding</keyword>
<dbReference type="EC" id="3.1.3.5" evidence="1"/>
<dbReference type="EMBL" id="CP001019">
    <property type="protein sequence ID" value="ACJ17783.1"/>
    <property type="molecule type" value="Genomic_DNA"/>
</dbReference>
<dbReference type="RefSeq" id="WP_005770587.1">
    <property type="nucleotide sequence ID" value="NC_011527.1"/>
</dbReference>
<dbReference type="SMR" id="B6J3X6"/>
<dbReference type="KEGG" id="cbg:CbuG_0349"/>
<dbReference type="HOGENOM" id="CLU_045192_1_2_6"/>
<dbReference type="GO" id="GO:0005737">
    <property type="term" value="C:cytoplasm"/>
    <property type="evidence" value="ECO:0007669"/>
    <property type="project" value="UniProtKB-SubCell"/>
</dbReference>
<dbReference type="GO" id="GO:0008254">
    <property type="term" value="F:3'-nucleotidase activity"/>
    <property type="evidence" value="ECO:0007669"/>
    <property type="project" value="TreeGrafter"/>
</dbReference>
<dbReference type="GO" id="GO:0008253">
    <property type="term" value="F:5'-nucleotidase activity"/>
    <property type="evidence" value="ECO:0007669"/>
    <property type="project" value="UniProtKB-UniRule"/>
</dbReference>
<dbReference type="GO" id="GO:0004309">
    <property type="term" value="F:exopolyphosphatase activity"/>
    <property type="evidence" value="ECO:0007669"/>
    <property type="project" value="TreeGrafter"/>
</dbReference>
<dbReference type="GO" id="GO:0046872">
    <property type="term" value="F:metal ion binding"/>
    <property type="evidence" value="ECO:0007669"/>
    <property type="project" value="UniProtKB-UniRule"/>
</dbReference>
<dbReference type="GO" id="GO:0000166">
    <property type="term" value="F:nucleotide binding"/>
    <property type="evidence" value="ECO:0007669"/>
    <property type="project" value="UniProtKB-KW"/>
</dbReference>
<dbReference type="FunFam" id="3.40.1210.10:FF:000001">
    <property type="entry name" value="5'/3'-nucleotidase SurE"/>
    <property type="match status" value="1"/>
</dbReference>
<dbReference type="Gene3D" id="3.40.1210.10">
    <property type="entry name" value="Survival protein SurE-like phosphatase/nucleotidase"/>
    <property type="match status" value="1"/>
</dbReference>
<dbReference type="HAMAP" id="MF_00060">
    <property type="entry name" value="SurE"/>
    <property type="match status" value="1"/>
</dbReference>
<dbReference type="InterPro" id="IPR030048">
    <property type="entry name" value="SurE"/>
</dbReference>
<dbReference type="InterPro" id="IPR002828">
    <property type="entry name" value="SurE-like_Pase/nucleotidase"/>
</dbReference>
<dbReference type="InterPro" id="IPR036523">
    <property type="entry name" value="SurE-like_sf"/>
</dbReference>
<dbReference type="NCBIfam" id="NF001489">
    <property type="entry name" value="PRK00346.1-3"/>
    <property type="match status" value="1"/>
</dbReference>
<dbReference type="NCBIfam" id="NF001490">
    <property type="entry name" value="PRK00346.1-4"/>
    <property type="match status" value="1"/>
</dbReference>
<dbReference type="NCBIfam" id="TIGR00087">
    <property type="entry name" value="surE"/>
    <property type="match status" value="1"/>
</dbReference>
<dbReference type="PANTHER" id="PTHR30457">
    <property type="entry name" value="5'-NUCLEOTIDASE SURE"/>
    <property type="match status" value="1"/>
</dbReference>
<dbReference type="PANTHER" id="PTHR30457:SF12">
    <property type="entry name" value="5'_3'-NUCLEOTIDASE SURE"/>
    <property type="match status" value="1"/>
</dbReference>
<dbReference type="Pfam" id="PF01975">
    <property type="entry name" value="SurE"/>
    <property type="match status" value="1"/>
</dbReference>
<dbReference type="SUPFAM" id="SSF64167">
    <property type="entry name" value="SurE-like"/>
    <property type="match status" value="1"/>
</dbReference>
<name>SURE_COXB2</name>
<gene>
    <name evidence="1" type="primary">surE</name>
    <name type="ordered locus">CbuG_0349</name>
</gene>
<sequence>MKKTATPKLRLLLSNDDGVYAKGLAILAKTLADLGEVDVVAPDRNRSGASNSLTLNAPLHIKNLENGMISVEGTPTDCVHLAITGVLPEMPDMVVAGINAGPNLGDDVWYSGTVAAAMEGRFLGLPALAVSLGGELFRYYETAAKVVYQLIQRIEKDPLPPSTILNINVPDLPYEELKGFEVTRLGTRHRAEPTIRQIDPRGHPIYWVGAAGPEQDSGPGTDFFAMNHHCVSITPLRVDLTHYEAFDQLASWVKRLEM</sequence>
<accession>B6J3X6</accession>
<evidence type="ECO:0000255" key="1">
    <source>
        <dbReference type="HAMAP-Rule" id="MF_00060"/>
    </source>
</evidence>
<reference key="1">
    <citation type="journal article" date="2009" name="Infect. Immun.">
        <title>Comparative genomics reveal extensive transposon-mediated genomic plasticity and diversity among potential effector proteins within the genus Coxiella.</title>
        <authorList>
            <person name="Beare P.A."/>
            <person name="Unsworth N."/>
            <person name="Andoh M."/>
            <person name="Voth D.E."/>
            <person name="Omsland A."/>
            <person name="Gilk S.D."/>
            <person name="Williams K.P."/>
            <person name="Sobral B.W."/>
            <person name="Kupko J.J. III"/>
            <person name="Porcella S.F."/>
            <person name="Samuel J.E."/>
            <person name="Heinzen R.A."/>
        </authorList>
    </citation>
    <scope>NUCLEOTIDE SEQUENCE [LARGE SCALE GENOMIC DNA]</scope>
    <source>
        <strain>CbuG_Q212</strain>
    </source>
</reference>
<proteinExistence type="inferred from homology"/>
<protein>
    <recommendedName>
        <fullName evidence="1">5'-nucleotidase SurE</fullName>
        <ecNumber evidence="1">3.1.3.5</ecNumber>
    </recommendedName>
    <alternativeName>
        <fullName evidence="1">Nucleoside 5'-monophosphate phosphohydrolase</fullName>
    </alternativeName>
</protein>
<organism>
    <name type="scientific">Coxiella burnetii (strain CbuG_Q212)</name>
    <name type="common">Coxiella burnetii (strain Q212)</name>
    <dbReference type="NCBI Taxonomy" id="434923"/>
    <lineage>
        <taxon>Bacteria</taxon>
        <taxon>Pseudomonadati</taxon>
        <taxon>Pseudomonadota</taxon>
        <taxon>Gammaproteobacteria</taxon>
        <taxon>Legionellales</taxon>
        <taxon>Coxiellaceae</taxon>
        <taxon>Coxiella</taxon>
    </lineage>
</organism>